<sequence length="387" mass="42452">MYCIGLISGTSVDGIDACLVDISGSGLDLKVDLLRGETYPYPDALRQEILALCAGTPVSPEAIAFLDDSIAKEFAQAAQQIQQSLPPADLIGSHGQTIFHRPPNPEKAFSLGYSWQLGRGEAIANLTGITTVSNFRAADIAAGGQGAPLVSKIDVCLLSHQNEHRCVQNLGGIGNVTYLPPRSQTNWQEKICGWDTGPANVLVDLAVQKFTQGEKTYDQGGQWAAQGKPRQELVDQWLQEPFFEQYPPKSTGRELFGALYLDNCWIEAQRHGLNETDFLTTLTEFTARSVVTEYQRFLPQLPDRLLLCGGGAHNLYLRERLQYHLGSNTKIQRTDDVGLNSDFKEAIAFAVLAYWRFQEQFPGNVPLVTGASQDCLLGDIHLVPVGS</sequence>
<name>ANMK_SYNY3</name>
<keyword id="KW-0067">ATP-binding</keyword>
<keyword id="KW-0119">Carbohydrate metabolism</keyword>
<keyword id="KW-0418">Kinase</keyword>
<keyword id="KW-0547">Nucleotide-binding</keyword>
<keyword id="KW-1185">Reference proteome</keyword>
<keyword id="KW-0808">Transferase</keyword>
<protein>
    <recommendedName>
        <fullName evidence="1">Anhydro-N-acetylmuramic acid kinase</fullName>
        <ecNumber evidence="1">2.7.1.170</ecNumber>
    </recommendedName>
    <alternativeName>
        <fullName evidence="1">AnhMurNAc kinase</fullName>
    </alternativeName>
</protein>
<reference key="1">
    <citation type="journal article" date="1996" name="DNA Res.">
        <title>Sequence analysis of the genome of the unicellular cyanobacterium Synechocystis sp. strain PCC6803. II. Sequence determination of the entire genome and assignment of potential protein-coding regions.</title>
        <authorList>
            <person name="Kaneko T."/>
            <person name="Sato S."/>
            <person name="Kotani H."/>
            <person name="Tanaka A."/>
            <person name="Asamizu E."/>
            <person name="Nakamura Y."/>
            <person name="Miyajima N."/>
            <person name="Hirosawa M."/>
            <person name="Sugiura M."/>
            <person name="Sasamoto S."/>
            <person name="Kimura T."/>
            <person name="Hosouchi T."/>
            <person name="Matsuno A."/>
            <person name="Muraki A."/>
            <person name="Nakazaki N."/>
            <person name="Naruo K."/>
            <person name="Okumura S."/>
            <person name="Shimpo S."/>
            <person name="Takeuchi C."/>
            <person name="Wada T."/>
            <person name="Watanabe A."/>
            <person name="Yamada M."/>
            <person name="Yasuda M."/>
            <person name="Tabata S."/>
        </authorList>
    </citation>
    <scope>NUCLEOTIDE SEQUENCE [LARGE SCALE GENOMIC DNA]</scope>
    <source>
        <strain>ATCC 27184 / PCC 6803 / Kazusa</strain>
    </source>
</reference>
<organism>
    <name type="scientific">Synechocystis sp. (strain ATCC 27184 / PCC 6803 / Kazusa)</name>
    <dbReference type="NCBI Taxonomy" id="1111708"/>
    <lineage>
        <taxon>Bacteria</taxon>
        <taxon>Bacillati</taxon>
        <taxon>Cyanobacteriota</taxon>
        <taxon>Cyanophyceae</taxon>
        <taxon>Synechococcales</taxon>
        <taxon>Merismopediaceae</taxon>
        <taxon>Synechocystis</taxon>
    </lineage>
</organism>
<gene>
    <name evidence="1" type="primary">anmK</name>
    <name type="ordered locus">slr1179</name>
</gene>
<accession>P74706</accession>
<proteinExistence type="inferred from homology"/>
<feature type="chain" id="PRO_0000214823" description="Anhydro-N-acetylmuramic acid kinase">
    <location>
        <begin position="1"/>
        <end position="387"/>
    </location>
</feature>
<feature type="binding site" evidence="1">
    <location>
        <begin position="9"/>
        <end position="16"/>
    </location>
    <ligand>
        <name>ATP</name>
        <dbReference type="ChEBI" id="CHEBI:30616"/>
    </ligand>
</feature>
<dbReference type="EC" id="2.7.1.170" evidence="1"/>
<dbReference type="EMBL" id="BA000022">
    <property type="protein sequence ID" value="BAA18825.1"/>
    <property type="status" value="ALT_INIT"/>
    <property type="molecule type" value="Genomic_DNA"/>
</dbReference>
<dbReference type="PIR" id="S76913">
    <property type="entry name" value="S76913"/>
</dbReference>
<dbReference type="SMR" id="P74706"/>
<dbReference type="IntAct" id="P74706">
    <property type="interactions" value="1"/>
</dbReference>
<dbReference type="STRING" id="1148.gene:10500597"/>
<dbReference type="PaxDb" id="1148-1653915"/>
<dbReference type="EnsemblBacteria" id="BAA18825">
    <property type="protein sequence ID" value="BAA18825"/>
    <property type="gene ID" value="BAA18825"/>
</dbReference>
<dbReference type="KEGG" id="syn:slr1179"/>
<dbReference type="eggNOG" id="COG2377">
    <property type="taxonomic scope" value="Bacteria"/>
</dbReference>
<dbReference type="InParanoid" id="P74706"/>
<dbReference type="PhylomeDB" id="P74706"/>
<dbReference type="UniPathway" id="UPA00343"/>
<dbReference type="UniPathway" id="UPA00544"/>
<dbReference type="Proteomes" id="UP000001425">
    <property type="component" value="Chromosome"/>
</dbReference>
<dbReference type="GO" id="GO:0005524">
    <property type="term" value="F:ATP binding"/>
    <property type="evidence" value="ECO:0007669"/>
    <property type="project" value="UniProtKB-UniRule"/>
</dbReference>
<dbReference type="GO" id="GO:0016301">
    <property type="term" value="F:kinase activity"/>
    <property type="evidence" value="ECO:0000318"/>
    <property type="project" value="GO_Central"/>
</dbReference>
<dbReference type="GO" id="GO:0016773">
    <property type="term" value="F:phosphotransferase activity, alcohol group as acceptor"/>
    <property type="evidence" value="ECO:0007669"/>
    <property type="project" value="UniProtKB-UniRule"/>
</dbReference>
<dbReference type="GO" id="GO:0097175">
    <property type="term" value="P:1,6-anhydro-N-acetyl-beta-muramic acid catabolic process"/>
    <property type="evidence" value="ECO:0007669"/>
    <property type="project" value="UniProtKB-UniRule"/>
</dbReference>
<dbReference type="GO" id="GO:0006040">
    <property type="term" value="P:amino sugar metabolic process"/>
    <property type="evidence" value="ECO:0007669"/>
    <property type="project" value="InterPro"/>
</dbReference>
<dbReference type="GO" id="GO:0009254">
    <property type="term" value="P:peptidoglycan turnover"/>
    <property type="evidence" value="ECO:0007669"/>
    <property type="project" value="UniProtKB-UniRule"/>
</dbReference>
<dbReference type="CDD" id="cd24050">
    <property type="entry name" value="ASKHA_NBD_ANMK"/>
    <property type="match status" value="1"/>
</dbReference>
<dbReference type="Gene3D" id="3.30.420.40">
    <property type="match status" value="2"/>
</dbReference>
<dbReference type="HAMAP" id="MF_01270">
    <property type="entry name" value="AnhMurNAc_kinase"/>
    <property type="match status" value="1"/>
</dbReference>
<dbReference type="InterPro" id="IPR005338">
    <property type="entry name" value="Anhydro_N_Ac-Mur_kinase"/>
</dbReference>
<dbReference type="InterPro" id="IPR043129">
    <property type="entry name" value="ATPase_NBD"/>
</dbReference>
<dbReference type="NCBIfam" id="NF007143">
    <property type="entry name" value="PRK09585.2-2"/>
    <property type="match status" value="1"/>
</dbReference>
<dbReference type="NCBIfam" id="NF007148">
    <property type="entry name" value="PRK09585.3-2"/>
    <property type="match status" value="1"/>
</dbReference>
<dbReference type="PANTHER" id="PTHR30605">
    <property type="entry name" value="ANHYDRO-N-ACETYLMURAMIC ACID KINASE"/>
    <property type="match status" value="1"/>
</dbReference>
<dbReference type="PANTHER" id="PTHR30605:SF0">
    <property type="entry name" value="ANHYDRO-N-ACETYLMURAMIC ACID KINASE"/>
    <property type="match status" value="1"/>
</dbReference>
<dbReference type="Pfam" id="PF03702">
    <property type="entry name" value="AnmK"/>
    <property type="match status" value="1"/>
</dbReference>
<dbReference type="SUPFAM" id="SSF53067">
    <property type="entry name" value="Actin-like ATPase domain"/>
    <property type="match status" value="1"/>
</dbReference>
<evidence type="ECO:0000255" key="1">
    <source>
        <dbReference type="HAMAP-Rule" id="MF_01270"/>
    </source>
</evidence>
<evidence type="ECO:0000305" key="2"/>
<comment type="function">
    <text evidence="1">Catalyzes the specific phosphorylation of 1,6-anhydro-N-acetylmuramic acid (anhMurNAc) with the simultaneous cleavage of the 1,6-anhydro ring, generating MurNAc-6-P. Is required for the utilization of anhMurNAc either imported from the medium or derived from its own cell wall murein, and thus plays a role in cell wall recycling.</text>
</comment>
<comment type="catalytic activity">
    <reaction evidence="1">
        <text>1,6-anhydro-N-acetyl-beta-muramate + ATP + H2O = N-acetyl-D-muramate 6-phosphate + ADP + H(+)</text>
        <dbReference type="Rhea" id="RHEA:24952"/>
        <dbReference type="ChEBI" id="CHEBI:15377"/>
        <dbReference type="ChEBI" id="CHEBI:15378"/>
        <dbReference type="ChEBI" id="CHEBI:30616"/>
        <dbReference type="ChEBI" id="CHEBI:58690"/>
        <dbReference type="ChEBI" id="CHEBI:58722"/>
        <dbReference type="ChEBI" id="CHEBI:456216"/>
        <dbReference type="EC" id="2.7.1.170"/>
    </reaction>
</comment>
<comment type="pathway">
    <text evidence="1">Amino-sugar metabolism; 1,6-anhydro-N-acetylmuramate degradation.</text>
</comment>
<comment type="pathway">
    <text evidence="1">Cell wall biogenesis; peptidoglycan recycling.</text>
</comment>
<comment type="similarity">
    <text evidence="1">Belongs to the anhydro-N-acetylmuramic acid kinase family.</text>
</comment>
<comment type="sequence caution" evidence="2">
    <conflict type="erroneous initiation">
        <sequence resource="EMBL-CDS" id="BAA18825"/>
    </conflict>
</comment>